<keyword id="KW-0460">Magnesium</keyword>
<keyword id="KW-0479">Metal-binding</keyword>
<keyword id="KW-1185">Reference proteome</keyword>
<keyword id="KW-0784">Thiamine biosynthesis</keyword>
<keyword id="KW-0808">Transferase</keyword>
<reference key="1">
    <citation type="journal article" date="2006" name="J. Bacteriol.">
        <title>Complete genome sequence of the dehalorespiring bacterium Desulfitobacterium hafniense Y51 and comparison with Dehalococcoides ethenogenes 195.</title>
        <authorList>
            <person name="Nonaka H."/>
            <person name="Keresztes G."/>
            <person name="Shinoda Y."/>
            <person name="Ikenaga Y."/>
            <person name="Abe M."/>
            <person name="Naito K."/>
            <person name="Inatomi K."/>
            <person name="Furukawa K."/>
            <person name="Inui M."/>
            <person name="Yukawa H."/>
        </authorList>
    </citation>
    <scope>NUCLEOTIDE SEQUENCE [LARGE SCALE GENOMIC DNA]</scope>
    <source>
        <strain>Y51</strain>
    </source>
</reference>
<sequence>MAVDYSLYLVTDRILVGPKDFLLSIRKALEGGVTLLQLREKETNSREFYDIGVKVKELAAEFGVPLIINDRVDLALALDADGVHVGQQDLPLAKVRNIIGPDKILGYSVSSLEEALQGERMGADYLGAGPVFPTGSKKDAAEAIGLAKLKEIKAGVSLPVVGIGGIGAANLRAVKETGIDGVSVISAILSQEDPCAAAKGLMDLWRN</sequence>
<organism>
    <name type="scientific">Desulfitobacterium hafniense (strain Y51)</name>
    <dbReference type="NCBI Taxonomy" id="138119"/>
    <lineage>
        <taxon>Bacteria</taxon>
        <taxon>Bacillati</taxon>
        <taxon>Bacillota</taxon>
        <taxon>Clostridia</taxon>
        <taxon>Eubacteriales</taxon>
        <taxon>Desulfitobacteriaceae</taxon>
        <taxon>Desulfitobacterium</taxon>
    </lineage>
</organism>
<protein>
    <recommendedName>
        <fullName evidence="1">Thiamine-phosphate synthase</fullName>
        <shortName evidence="1">TP synthase</shortName>
        <shortName evidence="1">TPS</shortName>
        <ecNumber evidence="1">2.5.1.3</ecNumber>
    </recommendedName>
    <alternativeName>
        <fullName evidence="1">Thiamine-phosphate pyrophosphorylase</fullName>
        <shortName evidence="1">TMP pyrophosphorylase</shortName>
        <shortName evidence="1">TMP-PPase</shortName>
    </alternativeName>
</protein>
<accession>Q24XQ0</accession>
<name>THIE_DESHY</name>
<dbReference type="EC" id="2.5.1.3" evidence="1"/>
<dbReference type="EMBL" id="AP008230">
    <property type="protein sequence ID" value="BAE83192.1"/>
    <property type="molecule type" value="Genomic_DNA"/>
</dbReference>
<dbReference type="RefSeq" id="WP_005816649.1">
    <property type="nucleotide sequence ID" value="NC_007907.1"/>
</dbReference>
<dbReference type="SMR" id="Q24XQ0"/>
<dbReference type="STRING" id="138119.DSY1403"/>
<dbReference type="KEGG" id="dsy:DSY1403"/>
<dbReference type="eggNOG" id="COG0352">
    <property type="taxonomic scope" value="Bacteria"/>
</dbReference>
<dbReference type="HOGENOM" id="CLU_018272_3_2_9"/>
<dbReference type="UniPathway" id="UPA00060">
    <property type="reaction ID" value="UER00141"/>
</dbReference>
<dbReference type="Proteomes" id="UP000001946">
    <property type="component" value="Chromosome"/>
</dbReference>
<dbReference type="GO" id="GO:0005737">
    <property type="term" value="C:cytoplasm"/>
    <property type="evidence" value="ECO:0007669"/>
    <property type="project" value="TreeGrafter"/>
</dbReference>
<dbReference type="GO" id="GO:0000287">
    <property type="term" value="F:magnesium ion binding"/>
    <property type="evidence" value="ECO:0007669"/>
    <property type="project" value="UniProtKB-UniRule"/>
</dbReference>
<dbReference type="GO" id="GO:0004789">
    <property type="term" value="F:thiamine-phosphate diphosphorylase activity"/>
    <property type="evidence" value="ECO:0007669"/>
    <property type="project" value="UniProtKB-UniRule"/>
</dbReference>
<dbReference type="GO" id="GO:0009228">
    <property type="term" value="P:thiamine biosynthetic process"/>
    <property type="evidence" value="ECO:0007669"/>
    <property type="project" value="UniProtKB-KW"/>
</dbReference>
<dbReference type="GO" id="GO:0009229">
    <property type="term" value="P:thiamine diphosphate biosynthetic process"/>
    <property type="evidence" value="ECO:0007669"/>
    <property type="project" value="UniProtKB-UniRule"/>
</dbReference>
<dbReference type="CDD" id="cd00564">
    <property type="entry name" value="TMP_TenI"/>
    <property type="match status" value="1"/>
</dbReference>
<dbReference type="FunFam" id="3.20.20.70:FF:000096">
    <property type="entry name" value="Thiamine-phosphate synthase"/>
    <property type="match status" value="1"/>
</dbReference>
<dbReference type="Gene3D" id="3.20.20.70">
    <property type="entry name" value="Aldolase class I"/>
    <property type="match status" value="1"/>
</dbReference>
<dbReference type="HAMAP" id="MF_00097">
    <property type="entry name" value="TMP_synthase"/>
    <property type="match status" value="1"/>
</dbReference>
<dbReference type="InterPro" id="IPR013785">
    <property type="entry name" value="Aldolase_TIM"/>
</dbReference>
<dbReference type="InterPro" id="IPR036206">
    <property type="entry name" value="ThiamineP_synth_sf"/>
</dbReference>
<dbReference type="InterPro" id="IPR022998">
    <property type="entry name" value="ThiamineP_synth_TenI"/>
</dbReference>
<dbReference type="InterPro" id="IPR034291">
    <property type="entry name" value="TMP_synthase"/>
</dbReference>
<dbReference type="NCBIfam" id="TIGR00693">
    <property type="entry name" value="thiE"/>
    <property type="match status" value="1"/>
</dbReference>
<dbReference type="PANTHER" id="PTHR20857:SF23">
    <property type="entry name" value="THIAMINE BIOSYNTHETIC BIFUNCTIONAL ENZYME"/>
    <property type="match status" value="1"/>
</dbReference>
<dbReference type="PANTHER" id="PTHR20857">
    <property type="entry name" value="THIAMINE-PHOSPHATE PYROPHOSPHORYLASE"/>
    <property type="match status" value="1"/>
</dbReference>
<dbReference type="Pfam" id="PF02581">
    <property type="entry name" value="TMP-TENI"/>
    <property type="match status" value="1"/>
</dbReference>
<dbReference type="SUPFAM" id="SSF51391">
    <property type="entry name" value="Thiamin phosphate synthase"/>
    <property type="match status" value="1"/>
</dbReference>
<gene>
    <name evidence="1" type="primary">thiE</name>
    <name type="ordered locus">DSY1403</name>
</gene>
<feature type="chain" id="PRO_0000336390" description="Thiamine-phosphate synthase">
    <location>
        <begin position="1"/>
        <end position="207"/>
    </location>
</feature>
<feature type="binding site" evidence="1">
    <location>
        <begin position="37"/>
        <end position="41"/>
    </location>
    <ligand>
        <name>4-amino-2-methyl-5-(diphosphooxymethyl)pyrimidine</name>
        <dbReference type="ChEBI" id="CHEBI:57841"/>
    </ligand>
</feature>
<feature type="binding site" evidence="1">
    <location>
        <position position="69"/>
    </location>
    <ligand>
        <name>4-amino-2-methyl-5-(diphosphooxymethyl)pyrimidine</name>
        <dbReference type="ChEBI" id="CHEBI:57841"/>
    </ligand>
</feature>
<feature type="binding site" evidence="1">
    <location>
        <position position="70"/>
    </location>
    <ligand>
        <name>Mg(2+)</name>
        <dbReference type="ChEBI" id="CHEBI:18420"/>
    </ligand>
</feature>
<feature type="binding site" evidence="1">
    <location>
        <position position="89"/>
    </location>
    <ligand>
        <name>Mg(2+)</name>
        <dbReference type="ChEBI" id="CHEBI:18420"/>
    </ligand>
</feature>
<feature type="binding site" evidence="1">
    <location>
        <position position="108"/>
    </location>
    <ligand>
        <name>4-amino-2-methyl-5-(diphosphooxymethyl)pyrimidine</name>
        <dbReference type="ChEBI" id="CHEBI:57841"/>
    </ligand>
</feature>
<feature type="binding site" evidence="1">
    <location>
        <begin position="134"/>
        <end position="136"/>
    </location>
    <ligand>
        <name>2-[(2R,5Z)-2-carboxy-4-methylthiazol-5(2H)-ylidene]ethyl phosphate</name>
        <dbReference type="ChEBI" id="CHEBI:62899"/>
    </ligand>
</feature>
<feature type="binding site" evidence="1">
    <location>
        <position position="137"/>
    </location>
    <ligand>
        <name>4-amino-2-methyl-5-(diphosphooxymethyl)pyrimidine</name>
        <dbReference type="ChEBI" id="CHEBI:57841"/>
    </ligand>
</feature>
<feature type="binding site" evidence="1">
    <location>
        <position position="165"/>
    </location>
    <ligand>
        <name>2-[(2R,5Z)-2-carboxy-4-methylthiazol-5(2H)-ylidene]ethyl phosphate</name>
        <dbReference type="ChEBI" id="CHEBI:62899"/>
    </ligand>
</feature>
<feature type="binding site" evidence="1">
    <location>
        <begin position="185"/>
        <end position="186"/>
    </location>
    <ligand>
        <name>2-[(2R,5Z)-2-carboxy-4-methylthiazol-5(2H)-ylidene]ethyl phosphate</name>
        <dbReference type="ChEBI" id="CHEBI:62899"/>
    </ligand>
</feature>
<evidence type="ECO:0000255" key="1">
    <source>
        <dbReference type="HAMAP-Rule" id="MF_00097"/>
    </source>
</evidence>
<proteinExistence type="inferred from homology"/>
<comment type="function">
    <text evidence="1">Condenses 4-methyl-5-(beta-hydroxyethyl)thiazole monophosphate (THZ-P) and 2-methyl-4-amino-5-hydroxymethyl pyrimidine pyrophosphate (HMP-PP) to form thiamine monophosphate (TMP).</text>
</comment>
<comment type="catalytic activity">
    <reaction evidence="1">
        <text>2-[(2R,5Z)-2-carboxy-4-methylthiazol-5(2H)-ylidene]ethyl phosphate + 4-amino-2-methyl-5-(diphosphooxymethyl)pyrimidine + 2 H(+) = thiamine phosphate + CO2 + diphosphate</text>
        <dbReference type="Rhea" id="RHEA:47844"/>
        <dbReference type="ChEBI" id="CHEBI:15378"/>
        <dbReference type="ChEBI" id="CHEBI:16526"/>
        <dbReference type="ChEBI" id="CHEBI:33019"/>
        <dbReference type="ChEBI" id="CHEBI:37575"/>
        <dbReference type="ChEBI" id="CHEBI:57841"/>
        <dbReference type="ChEBI" id="CHEBI:62899"/>
        <dbReference type="EC" id="2.5.1.3"/>
    </reaction>
</comment>
<comment type="catalytic activity">
    <reaction evidence="1">
        <text>2-(2-carboxy-4-methylthiazol-5-yl)ethyl phosphate + 4-amino-2-methyl-5-(diphosphooxymethyl)pyrimidine + 2 H(+) = thiamine phosphate + CO2 + diphosphate</text>
        <dbReference type="Rhea" id="RHEA:47848"/>
        <dbReference type="ChEBI" id="CHEBI:15378"/>
        <dbReference type="ChEBI" id="CHEBI:16526"/>
        <dbReference type="ChEBI" id="CHEBI:33019"/>
        <dbReference type="ChEBI" id="CHEBI:37575"/>
        <dbReference type="ChEBI" id="CHEBI:57841"/>
        <dbReference type="ChEBI" id="CHEBI:62890"/>
        <dbReference type="EC" id="2.5.1.3"/>
    </reaction>
</comment>
<comment type="catalytic activity">
    <reaction evidence="1">
        <text>4-methyl-5-(2-phosphooxyethyl)-thiazole + 4-amino-2-methyl-5-(diphosphooxymethyl)pyrimidine + H(+) = thiamine phosphate + diphosphate</text>
        <dbReference type="Rhea" id="RHEA:22328"/>
        <dbReference type="ChEBI" id="CHEBI:15378"/>
        <dbReference type="ChEBI" id="CHEBI:33019"/>
        <dbReference type="ChEBI" id="CHEBI:37575"/>
        <dbReference type="ChEBI" id="CHEBI:57841"/>
        <dbReference type="ChEBI" id="CHEBI:58296"/>
        <dbReference type="EC" id="2.5.1.3"/>
    </reaction>
</comment>
<comment type="cofactor">
    <cofactor evidence="1">
        <name>Mg(2+)</name>
        <dbReference type="ChEBI" id="CHEBI:18420"/>
    </cofactor>
    <text evidence="1">Binds 1 Mg(2+) ion per subunit.</text>
</comment>
<comment type="pathway">
    <text evidence="1">Cofactor biosynthesis; thiamine diphosphate biosynthesis; thiamine phosphate from 4-amino-2-methyl-5-diphosphomethylpyrimidine and 4-methyl-5-(2-phosphoethyl)-thiazole: step 1/1.</text>
</comment>
<comment type="similarity">
    <text evidence="1">Belongs to the thiamine-phosphate synthase family.</text>
</comment>